<keyword id="KW-0067">ATP-binding</keyword>
<keyword id="KW-0547">Nucleotide-binding</keyword>
<keyword id="KW-1185">Reference proteome</keyword>
<keyword id="KW-0813">Transport</keyword>
<name>Y986_MYCTO</name>
<comment type="similarity">
    <text evidence="2">Belongs to the ABC transporter superfamily.</text>
</comment>
<organism>
    <name type="scientific">Mycobacterium tuberculosis (strain CDC 1551 / Oshkosh)</name>
    <dbReference type="NCBI Taxonomy" id="83331"/>
    <lineage>
        <taxon>Bacteria</taxon>
        <taxon>Bacillati</taxon>
        <taxon>Actinomycetota</taxon>
        <taxon>Actinomycetes</taxon>
        <taxon>Mycobacteriales</taxon>
        <taxon>Mycobacteriaceae</taxon>
        <taxon>Mycobacterium</taxon>
        <taxon>Mycobacterium tuberculosis complex</taxon>
    </lineage>
</organism>
<dbReference type="EMBL" id="AE000516">
    <property type="protein sequence ID" value="AAK45262.1"/>
    <property type="molecule type" value="Genomic_DNA"/>
</dbReference>
<dbReference type="PIR" id="F70821">
    <property type="entry name" value="F70821"/>
</dbReference>
<dbReference type="RefSeq" id="WP_003900248.1">
    <property type="nucleotide sequence ID" value="NZ_KK341227.1"/>
</dbReference>
<dbReference type="SMR" id="P9WQK0"/>
<dbReference type="KEGG" id="mtc:MT1014"/>
<dbReference type="PATRIC" id="fig|83331.31.peg.1088"/>
<dbReference type="HOGENOM" id="CLU_000604_1_22_11"/>
<dbReference type="Proteomes" id="UP000001020">
    <property type="component" value="Chromosome"/>
</dbReference>
<dbReference type="GO" id="GO:0005886">
    <property type="term" value="C:plasma membrane"/>
    <property type="evidence" value="ECO:0007669"/>
    <property type="project" value="TreeGrafter"/>
</dbReference>
<dbReference type="GO" id="GO:0005524">
    <property type="term" value="F:ATP binding"/>
    <property type="evidence" value="ECO:0007669"/>
    <property type="project" value="UniProtKB-KW"/>
</dbReference>
<dbReference type="GO" id="GO:0016887">
    <property type="term" value="F:ATP hydrolysis activity"/>
    <property type="evidence" value="ECO:0007669"/>
    <property type="project" value="InterPro"/>
</dbReference>
<dbReference type="GO" id="GO:0022857">
    <property type="term" value="F:transmembrane transporter activity"/>
    <property type="evidence" value="ECO:0007669"/>
    <property type="project" value="TreeGrafter"/>
</dbReference>
<dbReference type="CDD" id="cd03255">
    <property type="entry name" value="ABC_MJ0796_LolCDE_FtsE"/>
    <property type="match status" value="1"/>
</dbReference>
<dbReference type="FunFam" id="3.40.50.300:FF:000032">
    <property type="entry name" value="Export ABC transporter ATP-binding protein"/>
    <property type="match status" value="1"/>
</dbReference>
<dbReference type="Gene3D" id="3.40.50.300">
    <property type="entry name" value="P-loop containing nucleotide triphosphate hydrolases"/>
    <property type="match status" value="1"/>
</dbReference>
<dbReference type="InterPro" id="IPR003593">
    <property type="entry name" value="AAA+_ATPase"/>
</dbReference>
<dbReference type="InterPro" id="IPR003439">
    <property type="entry name" value="ABC_transporter-like_ATP-bd"/>
</dbReference>
<dbReference type="InterPro" id="IPR017871">
    <property type="entry name" value="ABC_transporter-like_CS"/>
</dbReference>
<dbReference type="InterPro" id="IPR015854">
    <property type="entry name" value="ABC_transpr_LolD-like"/>
</dbReference>
<dbReference type="InterPro" id="IPR017911">
    <property type="entry name" value="MacB-like_ATP-bd"/>
</dbReference>
<dbReference type="InterPro" id="IPR027417">
    <property type="entry name" value="P-loop_NTPase"/>
</dbReference>
<dbReference type="PANTHER" id="PTHR24220:SF685">
    <property type="entry name" value="ABC TRANSPORTER RELATED"/>
    <property type="match status" value="1"/>
</dbReference>
<dbReference type="PANTHER" id="PTHR24220">
    <property type="entry name" value="IMPORT ATP-BINDING PROTEIN"/>
    <property type="match status" value="1"/>
</dbReference>
<dbReference type="Pfam" id="PF00005">
    <property type="entry name" value="ABC_tran"/>
    <property type="match status" value="1"/>
</dbReference>
<dbReference type="SMART" id="SM00382">
    <property type="entry name" value="AAA"/>
    <property type="match status" value="1"/>
</dbReference>
<dbReference type="SUPFAM" id="SSF52540">
    <property type="entry name" value="P-loop containing nucleoside triphosphate hydrolases"/>
    <property type="match status" value="1"/>
</dbReference>
<dbReference type="PROSITE" id="PS00211">
    <property type="entry name" value="ABC_TRANSPORTER_1"/>
    <property type="match status" value="1"/>
</dbReference>
<dbReference type="PROSITE" id="PS50893">
    <property type="entry name" value="ABC_TRANSPORTER_2"/>
    <property type="match status" value="1"/>
</dbReference>
<accession>P9WQK0</accession>
<accession>L0T5H7</accession>
<accession>O53899</accession>
<gene>
    <name type="ordered locus">MT1014</name>
</gene>
<proteinExistence type="inferred from homology"/>
<evidence type="ECO:0000255" key="1">
    <source>
        <dbReference type="PROSITE-ProRule" id="PRU00434"/>
    </source>
</evidence>
<evidence type="ECO:0000305" key="2"/>
<protein>
    <recommendedName>
        <fullName>Uncharacterized ABC transporter ATP-binding protein MT1014</fullName>
    </recommendedName>
</protein>
<feature type="chain" id="PRO_0000426762" description="Uncharacterized ABC transporter ATP-binding protein MT1014">
    <location>
        <begin position="1"/>
        <end position="248"/>
    </location>
</feature>
<feature type="domain" description="ABC transporter" evidence="1">
    <location>
        <begin position="7"/>
        <end position="246"/>
    </location>
</feature>
<feature type="binding site" evidence="1">
    <location>
        <begin position="43"/>
        <end position="50"/>
    </location>
    <ligand>
        <name>ATP</name>
        <dbReference type="ChEBI" id="CHEBI:30616"/>
    </ligand>
</feature>
<reference key="1">
    <citation type="journal article" date="2002" name="J. Bacteriol.">
        <title>Whole-genome comparison of Mycobacterium tuberculosis clinical and laboratory strains.</title>
        <authorList>
            <person name="Fleischmann R.D."/>
            <person name="Alland D."/>
            <person name="Eisen J.A."/>
            <person name="Carpenter L."/>
            <person name="White O."/>
            <person name="Peterson J.D."/>
            <person name="DeBoy R.T."/>
            <person name="Dodson R.J."/>
            <person name="Gwinn M.L."/>
            <person name="Haft D.H."/>
            <person name="Hickey E.K."/>
            <person name="Kolonay J.F."/>
            <person name="Nelson W.C."/>
            <person name="Umayam L.A."/>
            <person name="Ermolaeva M.D."/>
            <person name="Salzberg S.L."/>
            <person name="Delcher A."/>
            <person name="Utterback T.R."/>
            <person name="Weidman J.F."/>
            <person name="Khouri H.M."/>
            <person name="Gill J."/>
            <person name="Mikula A."/>
            <person name="Bishai W."/>
            <person name="Jacobs W.R. Jr."/>
            <person name="Venter J.C."/>
            <person name="Fraser C.M."/>
        </authorList>
    </citation>
    <scope>NUCLEOTIDE SEQUENCE [LARGE SCALE GENOMIC DNA]</scope>
    <source>
        <strain>CDC 1551 / Oshkosh</strain>
    </source>
</reference>
<sequence>MNRQPIVQLSNLSWTFREGETRRQVLDHITFDFEPGEFVALLGQSGSGKSTLLNLISGIEKPTTGDVTINGFAITQKTERDRTLFRRDQIGIVFQFFNLIPTLTVLENITLPQELAGVSQRKAAVVARDLLEKVGMADRERTFPDKLSGGEQQRVAISRALAHNPMLVLADEPTGNLDSDTGDKVLDVLLDLTRQAGKTLIMATHSPSMTQHADRVVNLQGGRLIPAVNRENQTDQPASTILLPTSYE</sequence>